<name>TRPC3_HUMAN</name>
<sequence length="921" mass="105538">MSTKVRKCKEQARVTFPAPEEEEDEGEDEGAEPQRRRRGWRGVNGGLEPRSAPSQREPHGYCPPPFSHGPDLSMEGSPSLRRMTVMREKGRRQAVRGPAFMFNDRGTSLTAEEERFLDAAEYGNIPVVRKMLEESKTLNVNCVDYMGQNALQLAVGNEHLEVTELLLKKENLARIGDALLLAISKGYVRIVEAILNHPGFAASKRLTLSPCEQELQDDDFYAYDEDGTRFSPDITPIILAAHCQKYEVVHMLLMKGARIERPHDYFCKCGDCMEKQRHDSFSHSRSRINAYKGLASPAYLSLSSEDPVLTALELSNELAKLANIEKEFKNDYRKLSMQCKDFVVGVLDLCRDSEEVEAILNGDLESAEPLEVHRHKASLSRVKLAIKYEVKKFVAHPNCQQQLLTIWYENLSGLREQTIAIKCLVVLVVALGLPFLAIGYWIAPCSRLGKILRSPFMKFVAHAASFIIFLGLLVFNASDRFEGITTLPNITVTDYPKQIFRVKTTQFTWTEMLIMVWVLGMMWSECKELWLEGPREYILQLWNVLDFGMLSIFIAAFTARFLAFLQATKAQQYVDSYVQESDLSEVTLPPEIQYFTYARDKWLPSDPQIISEGLYAIAVVLSFSRIAYILPANESFGPLQISLGRTVKDIFKFMVLFIMVFFAFMIGMFILYSYYLGAKVNAAFTTVEESFKTLFWSIFGLSEVTSVVLKYDHKFIENIGYVLYGIYNVTMVVVLLNMLIAMINSSYQEIEDDSDVEWKFARSKLWLSYFDDGKTLPPPFSLVPSPKSFVYFIMRIVNFPKCRRRRLQKDIEMGMGNSKSRLNLFTQSNSRVFESHSFNSILNQPTRYQQIMKRLIKRYVLKAQVDKENDEVNEGELKEIKQDISSLRYELLEDKSQATEELAILIHKLSEKLNPSMLRCE</sequence>
<gene>
    <name type="primary">TRPC3</name>
    <name type="synonym">TRP3</name>
</gene>
<feature type="chain" id="PRO_0000215310" description="Short transient receptor potential channel 3">
    <location>
        <begin position="1"/>
        <end position="921"/>
    </location>
</feature>
<feature type="topological domain" description="Cytoplasmic" evidence="9">
    <location>
        <begin position="1"/>
        <end position="459"/>
    </location>
</feature>
<feature type="transmembrane region" description="Helical" evidence="9">
    <location>
        <begin position="460"/>
        <end position="477"/>
    </location>
</feature>
<feature type="topological domain" description="Extracellular" evidence="9">
    <location>
        <begin position="478"/>
        <end position="508"/>
    </location>
</feature>
<feature type="transmembrane region" description="Helical" evidence="9">
    <location>
        <begin position="509"/>
        <end position="527"/>
    </location>
</feature>
<feature type="topological domain" description="Cytoplasmic" evidence="9">
    <location>
        <begin position="528"/>
        <end position="540"/>
    </location>
</feature>
<feature type="transmembrane region" description="Helical" evidence="9">
    <location>
        <begin position="541"/>
        <end position="562"/>
    </location>
</feature>
<feature type="topological domain" description="Extracellular" evidence="9">
    <location>
        <begin position="563"/>
        <end position="606"/>
    </location>
</feature>
<feature type="transmembrane region" description="Helical" evidence="9">
    <location>
        <begin position="607"/>
        <end position="630"/>
    </location>
</feature>
<feature type="topological domain" description="Cytoplasmic" evidence="9">
    <location>
        <begin position="631"/>
        <end position="649"/>
    </location>
</feature>
<feature type="transmembrane region" description="Helical" evidence="9">
    <location>
        <begin position="650"/>
        <end position="673"/>
    </location>
</feature>
<feature type="topological domain" description="Extracellular" evidence="9">
    <location>
        <begin position="674"/>
        <end position="713"/>
    </location>
</feature>
<feature type="transmembrane region" description="Helical" evidence="9">
    <location>
        <begin position="714"/>
        <end position="739"/>
    </location>
</feature>
<feature type="topological domain" description="Cytoplasmic" evidence="9">
    <location>
        <begin position="740"/>
        <end position="921"/>
    </location>
</feature>
<feature type="repeat" description="ANK 1" evidence="1">
    <location>
        <begin position="111"/>
        <end position="140"/>
    </location>
</feature>
<feature type="repeat" description="ANK 2" evidence="1">
    <location>
        <begin position="146"/>
        <end position="175"/>
    </location>
</feature>
<feature type="repeat" description="ANK 3" evidence="1">
    <location>
        <begin position="177"/>
        <end position="203"/>
    </location>
</feature>
<feature type="repeat" description="ANK 4" evidence="1">
    <location>
        <begin position="232"/>
        <end position="261"/>
    </location>
</feature>
<feature type="repeat" description="ANK 5" evidence="1">
    <location>
        <begin position="634"/>
        <end position="663"/>
    </location>
</feature>
<feature type="region of interest" description="Disordered" evidence="2">
    <location>
        <begin position="1"/>
        <end position="73"/>
    </location>
</feature>
<feature type="region of interest" description="Binds to IP3R3">
    <location>
        <begin position="850"/>
        <end position="870"/>
    </location>
</feature>
<feature type="compositionally biased region" description="Acidic residues" evidence="2">
    <location>
        <begin position="19"/>
        <end position="31"/>
    </location>
</feature>
<feature type="binding site" evidence="11 23 25">
    <location>
        <position position="158"/>
    </location>
    <ligand>
        <name>Ca(2+)</name>
        <dbReference type="ChEBI" id="CHEBI:29108"/>
        <label>1</label>
    </ligand>
</feature>
<feature type="binding site" evidence="11 23">
    <location>
        <position position="525"/>
    </location>
    <ligand>
        <name>Ca(2+)</name>
        <dbReference type="ChEBI" id="CHEBI:29108"/>
        <label>2</label>
    </ligand>
</feature>
<feature type="binding site" evidence="11 23">
    <location>
        <position position="528"/>
    </location>
    <ligand>
        <name>Ca(2+)</name>
        <dbReference type="ChEBI" id="CHEBI:29108"/>
        <label>2</label>
    </ligand>
</feature>
<feature type="binding site" evidence="11 23">
    <location>
        <position position="543"/>
    </location>
    <ligand>
        <name>Ca(2+)</name>
        <dbReference type="ChEBI" id="CHEBI:29108"/>
        <label>2</label>
    </ligand>
</feature>
<feature type="binding site" evidence="11 23">
    <location>
        <position position="871"/>
    </location>
    <ligand>
        <name>Ca(2+)</name>
        <dbReference type="ChEBI" id="CHEBI:29108"/>
        <label>3</label>
    </ligand>
</feature>
<feature type="binding site" evidence="11 23">
    <location>
        <position position="874"/>
    </location>
    <ligand>
        <name>Ca(2+)</name>
        <dbReference type="ChEBI" id="CHEBI:29108"/>
        <label>3</label>
    </ligand>
</feature>
<feature type="binding site" evidence="11 23">
    <location>
        <position position="876"/>
    </location>
    <ligand>
        <name>Ca(2+)</name>
        <dbReference type="ChEBI" id="CHEBI:29108"/>
        <label>3</label>
    </ligand>
</feature>
<feature type="binding site" evidence="11 23 25">
    <location>
        <position position="883"/>
    </location>
    <ligand>
        <name>Ca(2+)</name>
        <dbReference type="ChEBI" id="CHEBI:29108"/>
        <label>1</label>
    </ligand>
</feature>
<feature type="glycosylation site" description="N-linked (GlcNAc...) asparagine" evidence="9 15 20">
    <location>
        <position position="489"/>
    </location>
</feature>
<feature type="splice variant" id="VSP_061592" description="In isoform 2.">
    <location>
        <begin position="1"/>
        <end position="73"/>
    </location>
</feature>
<feature type="sequence variant" id="VAR_073835" description="In SCA41; no effect on localization to the cell membrane; toxic gain of function effect; dbSNP:rs754235477." evidence="7">
    <original>R</original>
    <variation>H</variation>
    <location>
        <position position="847"/>
    </location>
</feature>
<feature type="mutagenesis site" description="No effect on inhibition by Ca(2+) or thermostability. No effect on activation by diacylglycerol (DAG) analog; when associated with A-874 and A-883." evidence="11">
    <original>E</original>
    <variation>A</variation>
    <location>
        <position position="525"/>
    </location>
</feature>
<feature type="mutagenesis site" description="Retains robust Ca(2+) inhibition with moderate enhancement of thermostability in low-Ca(2+) conditions. No effect on activation by diacylglycerol (DAG) analog; when associated with A-525 and A-883." evidence="11">
    <original>E</original>
    <variation>A</variation>
    <location>
        <position position="874"/>
    </location>
</feature>
<feature type="mutagenesis site" description="Loss of inhibition by intracellular Ca(2+) and loss of Ca(2+)-induced thermostability. Impaired extracellular Ca(2+) inhibition at a holding potential of -60 mV. No effect on activation by diacylglycerol (DAG) analog; when associated with A-525 and A-874." evidence="11">
    <original>D</original>
    <variation>A</variation>
    <location>
        <position position="883"/>
    </location>
</feature>
<feature type="mutagenesis site" description="Loss of inhibition by intracellular Ca(2+) and loss of Ca(2+)-induced thermostability." evidence="11">
    <original>R</original>
    <variation>C</variation>
    <location>
        <position position="888"/>
    </location>
</feature>
<feature type="sequence conflict" description="In Ref. 4; BAF76424." evidence="18" ref="4">
    <original>I</original>
    <variation>L</variation>
    <location>
        <position position="610"/>
    </location>
</feature>
<feature type="sequence conflict" description="In Ref. 4; BAF76424." evidence="18" ref="4">
    <original>Y</original>
    <variation>C</variation>
    <location>
        <position position="747"/>
    </location>
</feature>
<feature type="helix" evidence="28">
    <location>
        <begin position="111"/>
        <end position="121"/>
    </location>
</feature>
<feature type="helix" evidence="28">
    <location>
        <begin position="125"/>
        <end position="134"/>
    </location>
</feature>
<feature type="turn" evidence="27">
    <location>
        <begin position="145"/>
        <end position="147"/>
    </location>
</feature>
<feature type="helix" evidence="28">
    <location>
        <begin position="150"/>
        <end position="156"/>
    </location>
</feature>
<feature type="helix" evidence="28">
    <location>
        <begin position="160"/>
        <end position="168"/>
    </location>
</feature>
<feature type="strand" evidence="28">
    <location>
        <begin position="169"/>
        <end position="171"/>
    </location>
</feature>
<feature type="helix" evidence="28">
    <location>
        <begin position="175"/>
        <end position="185"/>
    </location>
</feature>
<feature type="helix" evidence="28">
    <location>
        <begin position="188"/>
        <end position="195"/>
    </location>
</feature>
<feature type="helix" evidence="28">
    <location>
        <begin position="198"/>
        <end position="201"/>
    </location>
</feature>
<feature type="strand" evidence="27">
    <location>
        <begin position="202"/>
        <end position="204"/>
    </location>
</feature>
<feature type="turn" evidence="28">
    <location>
        <begin position="205"/>
        <end position="207"/>
    </location>
</feature>
<feature type="helix" evidence="28">
    <location>
        <begin position="210"/>
        <end position="215"/>
    </location>
</feature>
<feature type="strand" evidence="30">
    <location>
        <begin position="220"/>
        <end position="222"/>
    </location>
</feature>
<feature type="strand" evidence="28">
    <location>
        <begin position="224"/>
        <end position="226"/>
    </location>
</feature>
<feature type="strand" evidence="28">
    <location>
        <begin position="228"/>
        <end position="230"/>
    </location>
</feature>
<feature type="helix" evidence="28">
    <location>
        <begin position="236"/>
        <end position="243"/>
    </location>
</feature>
<feature type="helix" evidence="28">
    <location>
        <begin position="246"/>
        <end position="255"/>
    </location>
</feature>
<feature type="helix" evidence="28">
    <location>
        <begin position="270"/>
        <end position="278"/>
    </location>
</feature>
<feature type="helix" evidence="28">
    <location>
        <begin position="282"/>
        <end position="294"/>
    </location>
</feature>
<feature type="helix" evidence="28">
    <location>
        <begin position="297"/>
        <end position="303"/>
    </location>
</feature>
<feature type="strand" evidence="29">
    <location>
        <begin position="304"/>
        <end position="306"/>
    </location>
</feature>
<feature type="helix" evidence="28">
    <location>
        <begin position="307"/>
        <end position="324"/>
    </location>
</feature>
<feature type="strand" evidence="29">
    <location>
        <begin position="326"/>
        <end position="328"/>
    </location>
</feature>
<feature type="helix" evidence="28">
    <location>
        <begin position="329"/>
        <end position="347"/>
    </location>
</feature>
<feature type="helix" evidence="28">
    <location>
        <begin position="353"/>
        <end position="360"/>
    </location>
</feature>
<feature type="helix" evidence="28">
    <location>
        <begin position="380"/>
        <end position="387"/>
    </location>
</feature>
<feature type="helix" evidence="28">
    <location>
        <begin position="391"/>
        <end position="394"/>
    </location>
</feature>
<feature type="helix" evidence="28">
    <location>
        <begin position="397"/>
        <end position="407"/>
    </location>
</feature>
<feature type="turn" evidence="29">
    <location>
        <begin position="408"/>
        <end position="410"/>
    </location>
</feature>
<feature type="helix" evidence="28">
    <location>
        <begin position="413"/>
        <end position="416"/>
    </location>
</feature>
<feature type="helix" evidence="28">
    <location>
        <begin position="419"/>
        <end position="442"/>
    </location>
</feature>
<feature type="strand" evidence="28">
    <location>
        <begin position="444"/>
        <end position="446"/>
    </location>
</feature>
<feature type="helix" evidence="28">
    <location>
        <begin position="447"/>
        <end position="452"/>
    </location>
</feature>
<feature type="helix" evidence="28">
    <location>
        <begin position="455"/>
        <end position="476"/>
    </location>
</feature>
<feature type="helix" evidence="28">
    <location>
        <begin position="477"/>
        <end position="480"/>
    </location>
</feature>
<feature type="strand" evidence="27">
    <location>
        <begin position="494"/>
        <end position="498"/>
    </location>
</feature>
<feature type="helix" evidence="28">
    <location>
        <begin position="500"/>
        <end position="505"/>
    </location>
</feature>
<feature type="helix" evidence="28">
    <location>
        <begin position="509"/>
        <end position="532"/>
    </location>
</feature>
<feature type="helix" evidence="28">
    <location>
        <begin position="534"/>
        <end position="538"/>
    </location>
</feature>
<feature type="helix" evidence="28">
    <location>
        <begin position="541"/>
        <end position="577"/>
    </location>
</feature>
<feature type="turn" evidence="28">
    <location>
        <begin position="581"/>
        <end position="583"/>
    </location>
</feature>
<feature type="strand" evidence="28">
    <location>
        <begin position="584"/>
        <end position="586"/>
    </location>
</feature>
<feature type="helix" evidence="28">
    <location>
        <begin position="590"/>
        <end position="593"/>
    </location>
</feature>
<feature type="helix" evidence="28">
    <location>
        <begin position="594"/>
        <end position="596"/>
    </location>
</feature>
<feature type="turn" evidence="30">
    <location>
        <begin position="599"/>
        <end position="601"/>
    </location>
</feature>
<feature type="helix" evidence="28">
    <location>
        <begin position="607"/>
        <end position="622"/>
    </location>
</feature>
<feature type="helix" evidence="28">
    <location>
        <begin position="623"/>
        <end position="625"/>
    </location>
</feature>
<feature type="helix" evidence="28">
    <location>
        <begin position="626"/>
        <end position="629"/>
    </location>
</feature>
<feature type="helix" evidence="28">
    <location>
        <begin position="630"/>
        <end position="632"/>
    </location>
</feature>
<feature type="turn" evidence="28">
    <location>
        <begin position="634"/>
        <end position="636"/>
    </location>
</feature>
<feature type="helix" evidence="28">
    <location>
        <begin position="637"/>
        <end position="672"/>
    </location>
</feature>
<feature type="helix" evidence="30">
    <location>
        <begin position="673"/>
        <end position="675"/>
    </location>
</feature>
<feature type="strand" evidence="28">
    <location>
        <begin position="676"/>
        <end position="682"/>
    </location>
</feature>
<feature type="strand" evidence="29">
    <location>
        <begin position="683"/>
        <end position="686"/>
    </location>
</feature>
<feature type="helix" evidence="28">
    <location>
        <begin position="687"/>
        <end position="696"/>
    </location>
</feature>
<feature type="turn" evidence="28">
    <location>
        <begin position="697"/>
        <end position="700"/>
    </location>
</feature>
<feature type="helix" evidence="28">
    <location>
        <begin position="704"/>
        <end position="706"/>
    </location>
</feature>
<feature type="strand" evidence="28">
    <location>
        <begin position="709"/>
        <end position="712"/>
    </location>
</feature>
<feature type="helix" evidence="28">
    <location>
        <begin position="714"/>
        <end position="747"/>
    </location>
</feature>
<feature type="strand" evidence="27">
    <location>
        <begin position="751"/>
        <end position="753"/>
    </location>
</feature>
<feature type="helix" evidence="28">
    <location>
        <begin position="754"/>
        <end position="768"/>
    </location>
</feature>
<feature type="helix" evidence="28">
    <location>
        <begin position="778"/>
        <end position="780"/>
    </location>
</feature>
<feature type="helix" evidence="28">
    <location>
        <begin position="847"/>
        <end position="867"/>
    </location>
</feature>
<feature type="helix" evidence="28">
    <location>
        <begin position="874"/>
        <end position="908"/>
    </location>
</feature>
<organism>
    <name type="scientific">Homo sapiens</name>
    <name type="common">Human</name>
    <dbReference type="NCBI Taxonomy" id="9606"/>
    <lineage>
        <taxon>Eukaryota</taxon>
        <taxon>Metazoa</taxon>
        <taxon>Chordata</taxon>
        <taxon>Craniata</taxon>
        <taxon>Vertebrata</taxon>
        <taxon>Euteleostomi</taxon>
        <taxon>Mammalia</taxon>
        <taxon>Eutheria</taxon>
        <taxon>Euarchontoglires</taxon>
        <taxon>Primates</taxon>
        <taxon>Haplorrhini</taxon>
        <taxon>Catarrhini</taxon>
        <taxon>Hominidae</taxon>
        <taxon>Homo</taxon>
    </lineage>
</organism>
<reference key="1">
    <citation type="journal article" date="1996" name="Cell">
        <title>trp, a novel mammalian gene family essential for agonist-activated capacitative Ca2+ entry.</title>
        <authorList>
            <person name="Zhu X."/>
            <person name="Jiang M."/>
            <person name="Peyton M."/>
            <person name="Boulay G."/>
            <person name="Hurst R."/>
            <person name="Stefani E."/>
            <person name="Birnbaumer L."/>
        </authorList>
    </citation>
    <scope>NUCLEOTIDE SEQUENCE [MRNA] (ISOFORM 2)</scope>
    <scope>FUNCTION (ISOFORM 2)</scope>
    <scope>TRANSPORTER ACTIVITY(ISOFORM 2)</scope>
    <source>
        <tissue>Embryonic kidney</tissue>
    </source>
</reference>
<reference key="2">
    <citation type="journal article" date="1997" name="Cell">
        <title>Coassembly of TRP and TRPL produces a distinct store-operated conductance.</title>
        <authorList>
            <person name="Xu X.-Z.S."/>
            <person name="Li H.-S."/>
            <person name="Guggino W.B."/>
            <person name="Montell C."/>
        </authorList>
    </citation>
    <scope>NUCLEOTIDE SEQUENCE [MRNA] (ISOFORM 2)</scope>
    <scope>INTERACTION WITH TRPC1 (ISOFORM 2)</scope>
</reference>
<reference key="3">
    <citation type="journal article" date="2005" name="Proc. Natl. Acad. Sci. U.S.A.">
        <title>Molecular cloning of TRPC3a, an N-terminally extended, store-operated variant of the human C3 transient receptor potential channel.</title>
        <authorList>
            <person name="Yildirim E."/>
            <person name="Kawasaki B.T."/>
            <person name="Birnbaumer L."/>
        </authorList>
    </citation>
    <scope>NUCLEOTIDE SEQUENCE [MRNA] (ISOFORM 1)</scope>
</reference>
<reference key="4">
    <citation type="submission" date="2006-03" db="EMBL/GenBank/DDBJ databases">
        <title>Molecular cloning of novel TRPC3 isoform.</title>
        <authorList>
            <person name="Yamazaki D."/>
            <person name="Yamamura H."/>
            <person name="Ohya S."/>
            <person name="Asai K."/>
            <person name="Imaizumi Y."/>
        </authorList>
    </citation>
    <scope>NUCLEOTIDE SEQUENCE [MRNA] (ISOFORM 2)</scope>
    <source>
        <tissue>Brain</tissue>
    </source>
</reference>
<reference key="5">
    <citation type="journal article" date="2005" name="Nature">
        <title>Generation and annotation of the DNA sequences of human chromosomes 2 and 4.</title>
        <authorList>
            <person name="Hillier L.W."/>
            <person name="Graves T.A."/>
            <person name="Fulton R.S."/>
            <person name="Fulton L.A."/>
            <person name="Pepin K.H."/>
            <person name="Minx P."/>
            <person name="Wagner-McPherson C."/>
            <person name="Layman D."/>
            <person name="Wylie K."/>
            <person name="Sekhon M."/>
            <person name="Becker M.C."/>
            <person name="Fewell G.A."/>
            <person name="Delehaunty K.D."/>
            <person name="Miner T.L."/>
            <person name="Nash W.E."/>
            <person name="Kremitzki C."/>
            <person name="Oddy L."/>
            <person name="Du H."/>
            <person name="Sun H."/>
            <person name="Bradshaw-Cordum H."/>
            <person name="Ali J."/>
            <person name="Carter J."/>
            <person name="Cordes M."/>
            <person name="Harris A."/>
            <person name="Isak A."/>
            <person name="van Brunt A."/>
            <person name="Nguyen C."/>
            <person name="Du F."/>
            <person name="Courtney L."/>
            <person name="Kalicki J."/>
            <person name="Ozersky P."/>
            <person name="Abbott S."/>
            <person name="Armstrong J."/>
            <person name="Belter E.A."/>
            <person name="Caruso L."/>
            <person name="Cedroni M."/>
            <person name="Cotton M."/>
            <person name="Davidson T."/>
            <person name="Desai A."/>
            <person name="Elliott G."/>
            <person name="Erb T."/>
            <person name="Fronick C."/>
            <person name="Gaige T."/>
            <person name="Haakenson W."/>
            <person name="Haglund K."/>
            <person name="Holmes A."/>
            <person name="Harkins R."/>
            <person name="Kim K."/>
            <person name="Kruchowski S.S."/>
            <person name="Strong C.M."/>
            <person name="Grewal N."/>
            <person name="Goyea E."/>
            <person name="Hou S."/>
            <person name="Levy A."/>
            <person name="Martinka S."/>
            <person name="Mead K."/>
            <person name="McLellan M.D."/>
            <person name="Meyer R."/>
            <person name="Randall-Maher J."/>
            <person name="Tomlinson C."/>
            <person name="Dauphin-Kohlberg S."/>
            <person name="Kozlowicz-Reilly A."/>
            <person name="Shah N."/>
            <person name="Swearengen-Shahid S."/>
            <person name="Snider J."/>
            <person name="Strong J.T."/>
            <person name="Thompson J."/>
            <person name="Yoakum M."/>
            <person name="Leonard S."/>
            <person name="Pearman C."/>
            <person name="Trani L."/>
            <person name="Radionenko M."/>
            <person name="Waligorski J.E."/>
            <person name="Wang C."/>
            <person name="Rock S.M."/>
            <person name="Tin-Wollam A.-M."/>
            <person name="Maupin R."/>
            <person name="Latreille P."/>
            <person name="Wendl M.C."/>
            <person name="Yang S.-P."/>
            <person name="Pohl C."/>
            <person name="Wallis J.W."/>
            <person name="Spieth J."/>
            <person name="Bieri T.A."/>
            <person name="Berkowicz N."/>
            <person name="Nelson J.O."/>
            <person name="Osborne J."/>
            <person name="Ding L."/>
            <person name="Meyer R."/>
            <person name="Sabo A."/>
            <person name="Shotland Y."/>
            <person name="Sinha P."/>
            <person name="Wohldmann P.E."/>
            <person name="Cook L.L."/>
            <person name="Hickenbotham M.T."/>
            <person name="Eldred J."/>
            <person name="Williams D."/>
            <person name="Jones T.A."/>
            <person name="She X."/>
            <person name="Ciccarelli F.D."/>
            <person name="Izaurralde E."/>
            <person name="Taylor J."/>
            <person name="Schmutz J."/>
            <person name="Myers R.M."/>
            <person name="Cox D.R."/>
            <person name="Huang X."/>
            <person name="McPherson J.D."/>
            <person name="Mardis E.R."/>
            <person name="Clifton S.W."/>
            <person name="Warren W.C."/>
            <person name="Chinwalla A.T."/>
            <person name="Eddy S.R."/>
            <person name="Marra M.A."/>
            <person name="Ovcharenko I."/>
            <person name="Furey T.S."/>
            <person name="Miller W."/>
            <person name="Eichler E.E."/>
            <person name="Bork P."/>
            <person name="Suyama M."/>
            <person name="Torrents D."/>
            <person name="Waterston R.H."/>
            <person name="Wilson R.K."/>
        </authorList>
    </citation>
    <scope>NUCLEOTIDE SEQUENCE [LARGE SCALE GENOMIC DNA]</scope>
</reference>
<reference key="6">
    <citation type="journal article" date="2004" name="Genome Res.">
        <title>The status, quality, and expansion of the NIH full-length cDNA project: the Mammalian Gene Collection (MGC).</title>
        <authorList>
            <consortium name="The MGC Project Team"/>
        </authorList>
    </citation>
    <scope>NUCLEOTIDE SEQUENCE [LARGE SCALE MRNA] (ISOFORM 2)</scope>
    <source>
        <tissue>Brain</tissue>
    </source>
</reference>
<reference key="7">
    <citation type="journal article" date="1995" name="Proc. Natl. Acad. Sci. U.S.A.">
        <title>TRPC1, a human homolog of a Drosophila store-operated channel.</title>
        <authorList>
            <person name="Wes P.D."/>
            <person name="Chevesich J."/>
            <person name="Jeromin A."/>
            <person name="Rosenberg C."/>
            <person name="Stetten G."/>
            <person name="Montell C."/>
        </authorList>
    </citation>
    <scope>NUCLEOTIDE SEQUENCE [MRNA] OF 705-820</scope>
    <source>
        <tissue>Fetal brain</tissue>
    </source>
</reference>
<reference key="8">
    <citation type="journal article" date="1998" name="J. Biol. Chem.">
        <title>The membrane topology of human transient receptor potential 3 as inferred from glycosylation-scanning mutagenesis and epitope immunocytochemistry.</title>
        <authorList>
            <person name="Vannier B."/>
            <person name="Zhu X."/>
            <person name="Brown D."/>
            <person name="Birnbaumer L."/>
        </authorList>
    </citation>
    <scope>GLYCOSYLATION AT ASN-489</scope>
    <scope>MEMBRANE TOPOLOGY</scope>
</reference>
<reference key="9">
    <citation type="journal article" date="1998" name="J. Biol. Chem.">
        <title>Receptor-activated Ca2+ influx via human Trp3 stably expressed in human embryonic kidney (HEK)293 cells. Evidence for a non-capacitative Ca2+ entry.</title>
        <authorList>
            <person name="Zhu X."/>
            <person name="Jiang M."/>
            <person name="Birnbaumer L."/>
        </authorList>
    </citation>
    <scope>FUNCTION</scope>
    <scope>TRANSPORTER ACTIVITY</scope>
</reference>
<reference key="10">
    <citation type="journal article" date="1998" name="Nature">
        <title>Functional interaction between InsP3 receptors and store-operated Htrp3 channels.</title>
        <authorList>
            <person name="Kiselyov K."/>
            <person name="Xu X."/>
            <person name="Mozhayeva G."/>
            <person name="Kuo T."/>
            <person name="Pessah I."/>
            <person name="Mignery G."/>
            <person name="Zhu X."/>
            <person name="Birnbaumer L."/>
            <person name="Muallem S."/>
        </authorList>
    </citation>
    <scope>INTERACTION WITH ITPR1</scope>
</reference>
<reference key="11">
    <citation type="journal article" date="1999" name="Nature">
        <title>Direct activation of human TRPC6 and TRPC3 channels by diacylglycerol.</title>
        <authorList>
            <person name="Hofmann T."/>
            <person name="Obukhov A.G."/>
            <person name="Schaefer M."/>
            <person name="Harteneck C."/>
            <person name="Gudermann T."/>
            <person name="Schultz G."/>
        </authorList>
    </citation>
    <scope>FUNCTION</scope>
    <scope>ACTIVITY REGULATION</scope>
    <scope>TRANSPORTER ACTIVITY</scope>
</reference>
<reference key="12">
    <citation type="journal article" date="1999" name="Proc. Natl. Acad. Sci. U.S.A.">
        <title>Modulation of Ca(2+) entry by polypeptides of the inositol 1,4, 5-trisphosphate receptor (IP3R) that bind transient receptor potential (TRP): evidence for roles of TRP and IP3R in store depletion-activated Ca(2+) entry.</title>
        <authorList>
            <person name="Boulay G."/>
            <person name="Brown D.M."/>
            <person name="Qin N."/>
            <person name="Jiang M."/>
            <person name="Dietrich A."/>
            <person name="Zhu M.X."/>
            <person name="Chen Z."/>
            <person name="Birnbaumer M."/>
            <person name="Mikoshiba K."/>
            <person name="Birnbaumer L."/>
        </authorList>
    </citation>
    <scope>ACTIVITY REGULATION</scope>
    <scope>INTERACTION WITH ITPR3</scope>
    <scope>FUNCTION</scope>
    <scope>TRANSPORTER ACTIVITY</scope>
</reference>
<reference key="13">
    <citation type="journal article" date="2005" name="J. Biol. Chem.">
        <title>MxA, a member of the dynamin superfamily, interacts with the ankyrin-like repeat domain of TRPC.</title>
        <authorList>
            <person name="Lussier M.P."/>
            <person name="Cayouette S."/>
            <person name="Lepage P.K."/>
            <person name="Bernier C.L."/>
            <person name="Francoeur N."/>
            <person name="St-Hilaire M."/>
            <person name="Pinard M."/>
            <person name="Boulay G."/>
        </authorList>
    </citation>
    <scope>INTERACTION WITH MX1</scope>
</reference>
<reference key="14">
    <citation type="journal article" date="2008" name="Cell Calcium">
        <title>RNF24, a new TRPC interacting protein, causes the intracellular retention of TRPC.</title>
        <authorList>
            <person name="Lussier M.P."/>
            <person name="Lepage P.K."/>
            <person name="Bousquet S.M."/>
            <person name="Boulay G."/>
        </authorList>
    </citation>
    <scope>INTERACTION WITH RNF24</scope>
</reference>
<reference key="15">
    <citation type="journal article" date="2010" name="Biochem. J.">
        <title>S165F mutation of junctophilin 2 affects Ca2+ signalling in skeletal muscle.</title>
        <authorList>
            <person name="Woo J.S."/>
            <person name="Hwang J.H."/>
            <person name="Ko J.K."/>
            <person name="Weisleder N."/>
            <person name="Kim do H."/>
            <person name="Ma J."/>
            <person name="Lee E.H."/>
        </authorList>
    </citation>
    <scope>INTERACTION WITH JPH2</scope>
</reference>
<reference key="16">
    <citation type="journal article" date="2007" name="J. Mol. Biol.">
        <title>The TRPC3 channel has a large internal chamber surrounded by signal sensing antennas.</title>
        <authorList>
            <person name="Mio K."/>
            <person name="Ogura T."/>
            <person name="Kiyonaka S."/>
            <person name="Hiroaki Y."/>
            <person name="Tanimura Y."/>
            <person name="Fujiyoshi Y."/>
            <person name="Mori Y."/>
            <person name="Sato C."/>
        </authorList>
    </citation>
    <scope>ELECTRON MICROSCOPY (15 ANGSTROMS)</scope>
    <scope>MEMBRANE TOPOLOGY</scope>
</reference>
<reference evidence="19" key="17">
    <citation type="journal article" date="2018" name="Cell Res.">
        <title>Structure of the receptor-activated human TRPC6 and TRPC3 ion channels.</title>
        <authorList>
            <person name="Tang Q."/>
            <person name="Guo W."/>
            <person name="Zheng L."/>
            <person name="Wu J.X."/>
            <person name="Liu M."/>
            <person name="Zhou X."/>
            <person name="Zhang X."/>
            <person name="Chen L."/>
        </authorList>
    </citation>
    <scope>STRUCTURE BY ELECTRON MICROSCOPY (4.36 ANGSTROMS) OF 86-921</scope>
    <scope>SUBUNIT</scope>
</reference>
<reference evidence="21 22" key="18">
    <citation type="journal article" date="2018" name="J. Biol. Chem.">
        <title>Structure-function analyses of the ion channel TRPC3 reveal that its cytoplasmic domain allosterically modulates channel gating.</title>
        <authorList>
            <person name="Sierra-Valdez F."/>
            <person name="Azumaya C.M."/>
            <person name="Romero L.O."/>
            <person name="Nakagawa T."/>
            <person name="Cordero-Morales J.F."/>
        </authorList>
    </citation>
    <scope>STRUCTURE BY ELECTRON MICROSCOPY (4.00 ANGSTROMS) OF 86-921 OF APO FORM</scope>
    <scope>FUNCTION</scope>
    <scope>SUBUNIT</scope>
    <scope>DOMAIN</scope>
    <scope>TRANSPORTER ACTIVITY</scope>
</reference>
<reference evidence="20" key="19">
    <citation type="journal article" date="2018" name="Elife">
        <title>Structure of the human lipid-gated cation channel TRPC3.</title>
        <authorList>
            <person name="Fan C."/>
            <person name="Choi W."/>
            <person name="Sun W."/>
            <person name="Du J."/>
            <person name="Lue W."/>
        </authorList>
    </citation>
    <scope>STRUCTURE BY ELECTRON MICROSCOPY (3.30 ANGSTROMS) OF 86-921 IN COMPLEX WITH LIPID</scope>
    <scope>FUNCTION</scope>
    <scope>SUBUNIT</scope>
    <scope>TRANSMEMBRANE DOMAINS</scope>
    <scope>TOPOLOGY</scope>
    <scope>GLYCOSYLATION AT ASN-489</scope>
    <scope>TRANSPORTER ACTIVITY</scope>
</reference>
<reference evidence="23 24 25 26" key="20">
    <citation type="journal article" date="2022" name="Neuron">
        <title>Structural mechanism of human TRPC3 and TRPC6 channel regulation by their intracellular calcium-binding sites.</title>
        <authorList>
            <person name="Guo W."/>
            <person name="Tang Q."/>
            <person name="Wei M."/>
            <person name="Kang Y."/>
            <person name="Wu J.X."/>
            <person name="Chen L."/>
        </authorList>
    </citation>
    <scope>STRUCTURE BY ELECTRON MICROSCOPY (2.70 ANGSTROMS) OF 86-921 OF WILD-TYPE AND MUTANT CYS-888 IN COMPLEX WITH CALCIUM</scope>
    <scope>FUNCTION</scope>
    <scope>ACTIVITY REGULATION</scope>
    <scope>SUBUNIT</scope>
    <scope>CALCIUM-BINDING SITES</scope>
    <scope>MUTAGENESIS OF GLU-525; GLU-874; ASP-883 AND ARG-888</scope>
    <scope>TRANSPORTER ACTIVITY</scope>
</reference>
<reference key="21">
    <citation type="journal article" date="2015" name="Mov. Disord.">
        <title>Do mutations in the murine ataxia gene TRPC3 cause cerebellar ataxia in humans?</title>
        <authorList>
            <person name="Fogel B.L."/>
            <person name="Hanson S.M."/>
            <person name="Becker E.B."/>
        </authorList>
    </citation>
    <scope>INVOLVEMENT IN SCA41</scope>
    <scope>VARIANT SCA41 HIS-847</scope>
    <scope>CHARACTERIZATION OF VARIANT SCA41 HIS-847</scope>
    <scope>SUBCELLULAR LOCATION</scope>
</reference>
<dbReference type="EMBL" id="U47050">
    <property type="protein sequence ID" value="AAC51653.1"/>
    <property type="molecule type" value="mRNA"/>
</dbReference>
<dbReference type="EMBL" id="Y13758">
    <property type="protein sequence ID" value="CAA74083.1"/>
    <property type="molecule type" value="mRNA"/>
</dbReference>
<dbReference type="EMBL" id="AY865574">
    <property type="protein sequence ID" value="AAW62292.1"/>
    <property type="molecule type" value="mRNA"/>
</dbReference>
<dbReference type="EMBL" id="AB255424">
    <property type="protein sequence ID" value="BAF76424.1"/>
    <property type="molecule type" value="mRNA"/>
</dbReference>
<dbReference type="EMBL" id="AC079341">
    <property type="status" value="NOT_ANNOTATED_CDS"/>
    <property type="molecule type" value="Genomic_DNA"/>
</dbReference>
<dbReference type="EMBL" id="AC108930">
    <property type="status" value="NOT_ANNOTATED_CDS"/>
    <property type="molecule type" value="Genomic_DNA"/>
</dbReference>
<dbReference type="EMBL" id="BC093682">
    <property type="protein sequence ID" value="AAH93682.1"/>
    <property type="molecule type" value="mRNA"/>
</dbReference>
<dbReference type="EMBL" id="BC093684">
    <property type="protein sequence ID" value="AAH93684.1"/>
    <property type="molecule type" value="mRNA"/>
</dbReference>
<dbReference type="EMBL" id="X89068">
    <property type="protein sequence ID" value="CAA61448.1"/>
    <property type="molecule type" value="mRNA"/>
</dbReference>
<dbReference type="CCDS" id="CCDS3725.1">
    <molecule id="Q13507-3"/>
</dbReference>
<dbReference type="CCDS" id="CCDS47130.1">
    <molecule id="Q13507-2"/>
</dbReference>
<dbReference type="RefSeq" id="NP_001124170.1">
    <molecule id="Q13507-2"/>
    <property type="nucleotide sequence ID" value="NM_001130698.2"/>
</dbReference>
<dbReference type="RefSeq" id="NP_003296.1">
    <molecule id="Q13507-3"/>
    <property type="nucleotide sequence ID" value="NM_003305.2"/>
</dbReference>
<dbReference type="PDB" id="5ZBG">
    <property type="method" value="EM"/>
    <property type="resolution" value="4.36 A"/>
    <property type="chains" value="A/B/C/D=86-921"/>
</dbReference>
<dbReference type="PDB" id="6CUD">
    <property type="method" value="EM"/>
    <property type="resolution" value="3.30 A"/>
    <property type="chains" value="A/B/C/D=86-891"/>
</dbReference>
<dbReference type="PDB" id="6D7L">
    <property type="method" value="EM"/>
    <property type="resolution" value="4.00 A"/>
    <property type="chains" value="A/B/C/D=86-921"/>
</dbReference>
<dbReference type="PDB" id="6DJS">
    <property type="method" value="EM"/>
    <property type="resolution" value="5.80 A"/>
    <property type="chains" value="A/B/C/D=86-384"/>
</dbReference>
<dbReference type="PDB" id="7DXB">
    <property type="method" value="EM"/>
    <property type="resolution" value="2.70 A"/>
    <property type="chains" value="A/B/C/D=86-921"/>
</dbReference>
<dbReference type="PDB" id="7DXC">
    <property type="method" value="EM"/>
    <property type="resolution" value="3.06 A"/>
    <property type="chains" value="A/B/C/D=86-921"/>
</dbReference>
<dbReference type="PDB" id="7DXD">
    <property type="method" value="EM"/>
    <property type="resolution" value="3.90 A"/>
    <property type="chains" value="A/B/C/D=86-921"/>
</dbReference>
<dbReference type="PDB" id="7DXE">
    <property type="method" value="EM"/>
    <property type="resolution" value="3.20 A"/>
    <property type="chains" value="A/B/C/D=352-821"/>
</dbReference>
<dbReference type="PDBsum" id="5ZBG"/>
<dbReference type="PDBsum" id="6CUD"/>
<dbReference type="PDBsum" id="6D7L"/>
<dbReference type="PDBsum" id="6DJS"/>
<dbReference type="PDBsum" id="7DXB"/>
<dbReference type="PDBsum" id="7DXC"/>
<dbReference type="PDBsum" id="7DXD"/>
<dbReference type="PDBsum" id="7DXE"/>
<dbReference type="EMDB" id="EMD-30903"/>
<dbReference type="EMDB" id="EMD-30904"/>
<dbReference type="EMDB" id="EMD-30905"/>
<dbReference type="EMDB" id="EMD-30906"/>
<dbReference type="EMDB" id="EMD-6911"/>
<dbReference type="EMDB" id="EMD-7620"/>
<dbReference type="EMDB" id="EMD-7823"/>
<dbReference type="SMR" id="Q13507"/>
<dbReference type="BioGRID" id="113073">
    <property type="interactions" value="19"/>
</dbReference>
<dbReference type="CORUM" id="Q13507"/>
<dbReference type="DIP" id="DIP-34311N"/>
<dbReference type="FunCoup" id="Q13507">
    <property type="interactions" value="118"/>
</dbReference>
<dbReference type="IntAct" id="Q13507">
    <property type="interactions" value="15"/>
</dbReference>
<dbReference type="STRING" id="9606.ENSP00000368966"/>
<dbReference type="BindingDB" id="Q13507"/>
<dbReference type="ChEMBL" id="CHEMBL2417348"/>
<dbReference type="DrugCentral" id="Q13507"/>
<dbReference type="GuidetoPHARMACOLOGY" id="488"/>
<dbReference type="TCDB" id="1.A.4.1.4">
    <property type="family name" value="the transient receptor potential ca2+/cation channel (trp-cc) family"/>
</dbReference>
<dbReference type="GlyCosmos" id="Q13507">
    <property type="glycosylation" value="2 sites, No reported glycans"/>
</dbReference>
<dbReference type="GlyGen" id="Q13507">
    <property type="glycosylation" value="1 site"/>
</dbReference>
<dbReference type="iPTMnet" id="Q13507"/>
<dbReference type="PhosphoSitePlus" id="Q13507"/>
<dbReference type="BioMuta" id="TRPC3"/>
<dbReference type="DMDM" id="332278239"/>
<dbReference type="jPOST" id="Q13507"/>
<dbReference type="MassIVE" id="Q13507"/>
<dbReference type="PaxDb" id="9606-ENSP00000368966"/>
<dbReference type="PeptideAtlas" id="Q13507"/>
<dbReference type="ProteomicsDB" id="59505">
    <molecule id="Q13507-2"/>
</dbReference>
<dbReference type="ProteomicsDB" id="59506">
    <molecule id="Q13507-3"/>
</dbReference>
<dbReference type="Antibodypedia" id="15891">
    <property type="antibodies" value="282 antibodies from 34 providers"/>
</dbReference>
<dbReference type="DNASU" id="7222"/>
<dbReference type="Ensembl" id="ENST00000264811.9">
    <molecule id="Q13507-3"/>
    <property type="protein sequence ID" value="ENSP00000264811.5"/>
    <property type="gene ID" value="ENSG00000138741.11"/>
</dbReference>
<dbReference type="Ensembl" id="ENST00000379645.8">
    <molecule id="Q13507-2"/>
    <property type="protein sequence ID" value="ENSP00000368966.3"/>
    <property type="gene ID" value="ENSG00000138741.11"/>
</dbReference>
<dbReference type="GeneID" id="7222"/>
<dbReference type="KEGG" id="hsa:7222"/>
<dbReference type="MANE-Select" id="ENST00000379645.8">
    <property type="protein sequence ID" value="ENSP00000368966.3"/>
    <property type="RefSeq nucleotide sequence ID" value="NM_001130698.2"/>
    <property type="RefSeq protein sequence ID" value="NP_001124170.1"/>
</dbReference>
<dbReference type="UCSC" id="uc003ief.3">
    <molecule id="Q13507-2"/>
    <property type="organism name" value="human"/>
</dbReference>
<dbReference type="AGR" id="HGNC:12335"/>
<dbReference type="CTD" id="7222"/>
<dbReference type="DisGeNET" id="7222"/>
<dbReference type="GeneCards" id="TRPC3"/>
<dbReference type="HGNC" id="HGNC:12335">
    <property type="gene designation" value="TRPC3"/>
</dbReference>
<dbReference type="HPA" id="ENSG00000138741">
    <property type="expression patterns" value="Tissue enhanced (brain, pituitary gland, retina)"/>
</dbReference>
<dbReference type="MalaCards" id="TRPC3"/>
<dbReference type="MIM" id="602345">
    <property type="type" value="gene"/>
</dbReference>
<dbReference type="MIM" id="616410">
    <property type="type" value="phenotype"/>
</dbReference>
<dbReference type="neXtProt" id="NX_Q13507"/>
<dbReference type="OpenTargets" id="ENSG00000138741"/>
<dbReference type="Orphanet" id="458798">
    <property type="disease" value="Spinocerebellar ataxia type 41"/>
</dbReference>
<dbReference type="PharmGKB" id="PA37008"/>
<dbReference type="VEuPathDB" id="HostDB:ENSG00000138741"/>
<dbReference type="eggNOG" id="KOG3609">
    <property type="taxonomic scope" value="Eukaryota"/>
</dbReference>
<dbReference type="GeneTree" id="ENSGT01060000248588"/>
<dbReference type="HOGENOM" id="CLU_005716_4_2_1"/>
<dbReference type="InParanoid" id="Q13507"/>
<dbReference type="OMA" id="REAHSYC"/>
<dbReference type="OrthoDB" id="2373987at2759"/>
<dbReference type="PAN-GO" id="Q13507">
    <property type="GO annotations" value="8 GO annotations based on evolutionary models"/>
</dbReference>
<dbReference type="TreeFam" id="TF313147"/>
<dbReference type="PathwayCommons" id="Q13507"/>
<dbReference type="Reactome" id="R-HSA-114508">
    <property type="pathway name" value="Effects of PIP2 hydrolysis"/>
</dbReference>
<dbReference type="Reactome" id="R-HSA-139853">
    <property type="pathway name" value="Elevation of cytosolic Ca2+ levels"/>
</dbReference>
<dbReference type="Reactome" id="R-HSA-3295583">
    <property type="pathway name" value="TRP channels"/>
</dbReference>
<dbReference type="Reactome" id="R-HSA-418890">
    <property type="pathway name" value="Role of second messengers in netrin-1 signaling"/>
</dbReference>
<dbReference type="Reactome" id="R-HSA-9022699">
    <property type="pathway name" value="MECP2 regulates neuronal receptors and channels"/>
</dbReference>
<dbReference type="SignaLink" id="Q13507"/>
<dbReference type="SIGNOR" id="Q13507"/>
<dbReference type="BioGRID-ORCS" id="7222">
    <property type="hits" value="10 hits in 1148 CRISPR screens"/>
</dbReference>
<dbReference type="ChiTaRS" id="TRPC3">
    <property type="organism name" value="human"/>
</dbReference>
<dbReference type="GeneWiki" id="TRPC3"/>
<dbReference type="GenomeRNAi" id="7222"/>
<dbReference type="Pharos" id="Q13507">
    <property type="development level" value="Tchem"/>
</dbReference>
<dbReference type="PRO" id="PR:Q13507"/>
<dbReference type="Proteomes" id="UP000005640">
    <property type="component" value="Chromosome 4"/>
</dbReference>
<dbReference type="RNAct" id="Q13507">
    <property type="molecule type" value="protein"/>
</dbReference>
<dbReference type="Bgee" id="ENSG00000138741">
    <property type="expression patterns" value="Expressed in buccal mucosa cell and 114 other cell types or tissues"/>
</dbReference>
<dbReference type="ExpressionAtlas" id="Q13507">
    <property type="expression patterns" value="baseline and differential"/>
</dbReference>
<dbReference type="GO" id="GO:0034703">
    <property type="term" value="C:cation channel complex"/>
    <property type="evidence" value="ECO:0000318"/>
    <property type="project" value="GO_Central"/>
</dbReference>
<dbReference type="GO" id="GO:0005886">
    <property type="term" value="C:plasma membrane"/>
    <property type="evidence" value="ECO:0000314"/>
    <property type="project" value="UniProtKB"/>
</dbReference>
<dbReference type="GO" id="GO:0005262">
    <property type="term" value="F:calcium channel activity"/>
    <property type="evidence" value="ECO:0000314"/>
    <property type="project" value="UniProtKB"/>
</dbReference>
<dbReference type="GO" id="GO:0005227">
    <property type="term" value="F:calcium-activated cation channel activity"/>
    <property type="evidence" value="ECO:0007669"/>
    <property type="project" value="Ensembl"/>
</dbReference>
<dbReference type="GO" id="GO:0070679">
    <property type="term" value="F:inositol 1,4,5 trisphosphate binding"/>
    <property type="evidence" value="ECO:0000314"/>
    <property type="project" value="BHF-UCL"/>
</dbReference>
<dbReference type="GO" id="GO:0046872">
    <property type="term" value="F:metal ion binding"/>
    <property type="evidence" value="ECO:0007669"/>
    <property type="project" value="UniProtKB-KW"/>
</dbReference>
<dbReference type="GO" id="GO:0015279">
    <property type="term" value="F:store-operated calcium channel activity"/>
    <property type="evidence" value="ECO:0000314"/>
    <property type="project" value="UniProtKB"/>
</dbReference>
<dbReference type="GO" id="GO:0070588">
    <property type="term" value="P:calcium ion transmembrane transport"/>
    <property type="evidence" value="ECO:0000314"/>
    <property type="project" value="UniProtKB"/>
</dbReference>
<dbReference type="GO" id="GO:0006816">
    <property type="term" value="P:calcium ion transport"/>
    <property type="evidence" value="ECO:0000304"/>
    <property type="project" value="ProtInc"/>
</dbReference>
<dbReference type="GO" id="GO:0007602">
    <property type="term" value="P:phototransduction"/>
    <property type="evidence" value="ECO:0000304"/>
    <property type="project" value="ProtInc"/>
</dbReference>
<dbReference type="GO" id="GO:0010524">
    <property type="term" value="P:positive regulation of calcium ion transport into cytosol"/>
    <property type="evidence" value="ECO:0000314"/>
    <property type="project" value="UniProtKB"/>
</dbReference>
<dbReference type="GO" id="GO:1903244">
    <property type="term" value="P:positive regulation of cardiac muscle hypertrophy in response to stress"/>
    <property type="evidence" value="ECO:0000314"/>
    <property type="project" value="BHF-UCL"/>
</dbReference>
<dbReference type="GO" id="GO:0051480">
    <property type="term" value="P:regulation of cytosolic calcium ion concentration"/>
    <property type="evidence" value="ECO:0000318"/>
    <property type="project" value="GO_Central"/>
</dbReference>
<dbReference type="GO" id="GO:0033198">
    <property type="term" value="P:response to ATP"/>
    <property type="evidence" value="ECO:0000314"/>
    <property type="project" value="UniProtKB"/>
</dbReference>
<dbReference type="GO" id="GO:0051592">
    <property type="term" value="P:response to calcium ion"/>
    <property type="evidence" value="ECO:0000314"/>
    <property type="project" value="UniProtKB"/>
</dbReference>
<dbReference type="GO" id="GO:0007338">
    <property type="term" value="P:single fertilization"/>
    <property type="evidence" value="ECO:0000318"/>
    <property type="project" value="GO_Central"/>
</dbReference>
<dbReference type="FunFam" id="1.25.40.20:FF:000157">
    <property type="entry name" value="short transient receptor potential channel 6 isoform X1"/>
    <property type="match status" value="1"/>
</dbReference>
<dbReference type="FunFam" id="1.10.287.70:FF:000041">
    <property type="entry name" value="Transient receptor potential cation channel subfamily C member 7"/>
    <property type="match status" value="1"/>
</dbReference>
<dbReference type="Gene3D" id="1.10.287.70">
    <property type="match status" value="1"/>
</dbReference>
<dbReference type="Gene3D" id="1.25.40.20">
    <property type="entry name" value="Ankyrin repeat-containing domain"/>
    <property type="match status" value="1"/>
</dbReference>
<dbReference type="InterPro" id="IPR002110">
    <property type="entry name" value="Ankyrin_rpt"/>
</dbReference>
<dbReference type="InterPro" id="IPR036770">
    <property type="entry name" value="Ankyrin_rpt-contain_sf"/>
</dbReference>
<dbReference type="InterPro" id="IPR005821">
    <property type="entry name" value="Ion_trans_dom"/>
</dbReference>
<dbReference type="InterPro" id="IPR013555">
    <property type="entry name" value="TRP_dom"/>
</dbReference>
<dbReference type="InterPro" id="IPR005459">
    <property type="entry name" value="TRPC3_channel"/>
</dbReference>
<dbReference type="InterPro" id="IPR002153">
    <property type="entry name" value="TRPC_channel"/>
</dbReference>
<dbReference type="NCBIfam" id="TIGR00870">
    <property type="entry name" value="trp"/>
    <property type="match status" value="1"/>
</dbReference>
<dbReference type="PANTHER" id="PTHR10117:SF8">
    <property type="entry name" value="SHORT TRANSIENT RECEPTOR POTENTIAL CHANNEL 3"/>
    <property type="match status" value="1"/>
</dbReference>
<dbReference type="PANTHER" id="PTHR10117">
    <property type="entry name" value="TRANSIENT RECEPTOR POTENTIAL CHANNEL"/>
    <property type="match status" value="1"/>
</dbReference>
<dbReference type="Pfam" id="PF12796">
    <property type="entry name" value="Ank_2"/>
    <property type="match status" value="1"/>
</dbReference>
<dbReference type="Pfam" id="PF00520">
    <property type="entry name" value="Ion_trans"/>
    <property type="match status" value="1"/>
</dbReference>
<dbReference type="Pfam" id="PF08344">
    <property type="entry name" value="TRP_2"/>
    <property type="match status" value="1"/>
</dbReference>
<dbReference type="PRINTS" id="PR01097">
    <property type="entry name" value="TRNSRECEPTRP"/>
</dbReference>
<dbReference type="PRINTS" id="PR01644">
    <property type="entry name" value="TRPCHANNEL3"/>
</dbReference>
<dbReference type="SMART" id="SM00248">
    <property type="entry name" value="ANK"/>
    <property type="match status" value="3"/>
</dbReference>
<dbReference type="SMART" id="SM01420">
    <property type="entry name" value="TRP_2"/>
    <property type="match status" value="1"/>
</dbReference>
<dbReference type="SUPFAM" id="SSF48403">
    <property type="entry name" value="Ankyrin repeat"/>
    <property type="match status" value="1"/>
</dbReference>
<dbReference type="PROSITE" id="PS50297">
    <property type="entry name" value="ANK_REP_REGION"/>
    <property type="match status" value="1"/>
</dbReference>
<accession>Q13507</accession>
<accession>A7VJS1</accession>
<accession>E9PCJ9</accession>
<accession>O00593</accession>
<accession>Q15660</accession>
<accession>Q52M35</accession>
<accession>Q5G1L5</accession>
<comment type="function">
    <text evidence="3 9 10 11 14 17">Forms a receptor-activated non-selective calcium permeant cation channel (PubMed:29726814, PubMed:30139744, PubMed:35051376, PubMed:9417057, PubMed:9930701, PubMed:10611319).</text>
</comment>
<comment type="function">
    <molecule>Isoform 2</molecule>
    <text evidence="12">Forms a receptor-activated non-selective calcium permeant cation channel. May be operated by a phosphatidylinositol second messenger system activated by receptor tyrosine kinases or G-protein coupled receptors.</text>
</comment>
<comment type="catalytic activity">
    <reaction evidence="3 9 10 11 14 17">
        <text>Ca(2+)(in) = Ca(2+)(out)</text>
        <dbReference type="Rhea" id="RHEA:29671"/>
        <dbReference type="ChEBI" id="CHEBI:29108"/>
    </reaction>
</comment>
<comment type="catalytic activity">
    <molecule>Isoform 2</molecule>
    <reaction evidence="12">
        <text>Ca(2+)(in) = Ca(2+)(out)</text>
        <dbReference type="Rhea" id="RHEA:29671"/>
        <dbReference type="ChEBI" id="CHEBI:29108"/>
    </reaction>
</comment>
<comment type="activity regulation">
    <text evidence="3 11 17">Activated by diacylglycerol (DAG) in a membrane-delimited fashion, independently of protein kinase C (PubMed:9930701). Activated by inositol 1,4,5-triphosphate receptors (ITPR) with bound IP3 (PubMed:10611319). May be activated by internal calcium store depletion. Inhibited by intracellular Ca(2+) (PubMed:35051376).</text>
</comment>
<comment type="subunit">
    <text evidence="3 4 5 6 8 9 10 11 16">Homotetramer (PubMed:29700422, PubMed:29726814, PubMed:30139744, PubMed:35051376). Interacts with ITPR1 (PubMed:9853757). Interacts with ITPR3 (PubMed:10611319). Interacts with MX1 (PubMed:15757897). Interacts with RNF24 (PubMed:17850865). Interacts with JPH2; the interaction is involved in maintaining Ca(2+) homeostasis in skeletal muscle and is mediated by JPH2 'Ser-165' phosphorylation (PubMed:20095964).</text>
</comment>
<comment type="subunit">
    <molecule>Isoform 2</molecule>
    <text evidence="13">Interacts with isoform short of TRPC1.</text>
</comment>
<comment type="interaction">
    <interactant intactId="EBI-520807">
        <id>Q13507</id>
    </interactant>
    <interactant intactId="EBI-351055">
        <id>Q14573</id>
        <label>ITPR3</label>
    </interactant>
    <organismsDiffer>false</organismsDiffer>
    <experiments>5</experiments>
</comment>
<comment type="interaction">
    <interactant intactId="EBI-520807">
        <id>Q13507</id>
    </interactant>
    <interactant intactId="EBI-929476">
        <id>P20591</id>
        <label>MX1</label>
    </interactant>
    <organismsDiffer>false</organismsDiffer>
    <experiments>2</experiments>
</comment>
<comment type="interaction">
    <interactant intactId="EBI-520807">
        <id>Q13507</id>
    </interactant>
    <interactant intactId="EBI-2291476">
        <id>Q96D31</id>
        <label>ORAI1</label>
    </interactant>
    <organismsDiffer>false</organismsDiffer>
    <experiments>2</experiments>
</comment>
<comment type="interaction">
    <interactant intactId="EBI-520807">
        <id>Q13507</id>
    </interactant>
    <interactant intactId="EBI-520788">
        <id>P10686</id>
        <label>Plcg1</label>
    </interactant>
    <organismsDiffer>true</organismsDiffer>
    <experiments>2</experiments>
</comment>
<comment type="interaction">
    <interactant intactId="EBI-15563545">
        <id>Q13507-3</id>
    </interactant>
    <interactant intactId="EBI-298680">
        <id>P05480</id>
        <label>Src</label>
    </interactant>
    <organismsDiffer>true</organismsDiffer>
    <experiments>4</experiments>
</comment>
<comment type="interaction">
    <interactant intactId="EBI-15563545">
        <id>Q13507-3</id>
    </interactant>
    <interactant intactId="EBI-295378">
        <id>Q80UE6</id>
        <label>Wnk4</label>
    </interactant>
    <organismsDiffer>true</organismsDiffer>
    <experiments>2</experiments>
</comment>
<comment type="subcellular location">
    <subcellularLocation>
        <location evidence="7">Cell membrane</location>
        <topology evidence="1">Multi-pass membrane protein</topology>
    </subcellularLocation>
</comment>
<comment type="alternative products">
    <event type="alternative splicing"/>
    <isoform>
        <id>Q13507-2</id>
        <name>1</name>
        <sequence type="displayed"/>
    </isoform>
    <isoform>
        <id>Q13507-3</id>
        <name>2</name>
        <sequence type="described" ref="VSP_061592"/>
    </isoform>
</comment>
<comment type="tissue specificity">
    <text>Expressed predominantly in brain and at much lower levels in ovary, colon, small intestine, lung, prostate, placenta and testis.</text>
</comment>
<comment type="domain">
    <text evidence="10">The cytoplasmic portion of the protein is required for channel assembly and gating.</text>
</comment>
<comment type="disease" evidence="7">
    <disease id="DI-04448">
        <name>Spinocerebellar ataxia 41</name>
        <acronym>SCA41</acronym>
        <description>A form of spinocerebellar ataxia, a clinically and genetically heterogeneous group of cerebellar disorders. Patients show progressive incoordination of gait and often poor coordination of hands, speech and eye movements, due to degeneration of the cerebellum with variable involvement of the brainstem and spinal cord.</description>
        <dbReference type="MIM" id="616410"/>
    </disease>
    <text>The disease is caused by variants affecting the gene represented in this entry.</text>
</comment>
<comment type="similarity">
    <text evidence="18">Belongs to the transient receptor (TC 1.A.4) family. STrpC subfamily. TRPC3 sub-subfamily.</text>
</comment>
<evidence type="ECO:0000255" key="1"/>
<evidence type="ECO:0000256" key="2">
    <source>
        <dbReference type="SAM" id="MobiDB-lite"/>
    </source>
</evidence>
<evidence type="ECO:0000269" key="3">
    <source>
    </source>
</evidence>
<evidence type="ECO:0000269" key="4">
    <source>
    </source>
</evidence>
<evidence type="ECO:0000269" key="5">
    <source>
    </source>
</evidence>
<evidence type="ECO:0000269" key="6">
    <source>
    </source>
</evidence>
<evidence type="ECO:0000269" key="7">
    <source>
    </source>
</evidence>
<evidence type="ECO:0000269" key="8">
    <source>
    </source>
</evidence>
<evidence type="ECO:0000269" key="9">
    <source>
    </source>
</evidence>
<evidence type="ECO:0000269" key="10">
    <source>
    </source>
</evidence>
<evidence type="ECO:0000269" key="11">
    <source>
    </source>
</evidence>
<evidence type="ECO:0000269" key="12">
    <source>
    </source>
</evidence>
<evidence type="ECO:0000269" key="13">
    <source>
    </source>
</evidence>
<evidence type="ECO:0000269" key="14">
    <source>
    </source>
</evidence>
<evidence type="ECO:0000269" key="15">
    <source>
    </source>
</evidence>
<evidence type="ECO:0000269" key="16">
    <source>
    </source>
</evidence>
<evidence type="ECO:0000269" key="17">
    <source>
    </source>
</evidence>
<evidence type="ECO:0000305" key="18"/>
<evidence type="ECO:0007744" key="19">
    <source>
        <dbReference type="PDB" id="5ZBG"/>
    </source>
</evidence>
<evidence type="ECO:0007744" key="20">
    <source>
        <dbReference type="PDB" id="6CUD"/>
    </source>
</evidence>
<evidence type="ECO:0007744" key="21">
    <source>
        <dbReference type="PDB" id="6D7L"/>
    </source>
</evidence>
<evidence type="ECO:0007744" key="22">
    <source>
        <dbReference type="PDB" id="6DJS"/>
    </source>
</evidence>
<evidence type="ECO:0007744" key="23">
    <source>
        <dbReference type="PDB" id="7DXB"/>
    </source>
</evidence>
<evidence type="ECO:0007744" key="24">
    <source>
        <dbReference type="PDB" id="7DXC"/>
    </source>
</evidence>
<evidence type="ECO:0007744" key="25">
    <source>
        <dbReference type="PDB" id="7DXD"/>
    </source>
</evidence>
<evidence type="ECO:0007744" key="26">
    <source>
        <dbReference type="PDB" id="7DXE"/>
    </source>
</evidence>
<evidence type="ECO:0007829" key="27">
    <source>
        <dbReference type="PDB" id="6CUD"/>
    </source>
</evidence>
<evidence type="ECO:0007829" key="28">
    <source>
        <dbReference type="PDB" id="7DXB"/>
    </source>
</evidence>
<evidence type="ECO:0007829" key="29">
    <source>
        <dbReference type="PDB" id="7DXC"/>
    </source>
</evidence>
<evidence type="ECO:0007829" key="30">
    <source>
        <dbReference type="PDB" id="7DXE"/>
    </source>
</evidence>
<proteinExistence type="evidence at protein level"/>
<protein>
    <recommendedName>
        <fullName>Short transient receptor potential channel 3</fullName>
        <shortName>TrpC3</shortName>
    </recommendedName>
    <alternativeName>
        <fullName>Transient receptor protein 3</fullName>
        <shortName>TRP-3</shortName>
        <shortName>hTrp-3</shortName>
        <shortName>hTrp3</shortName>
    </alternativeName>
</protein>
<keyword id="KW-0002">3D-structure</keyword>
<keyword id="KW-0025">Alternative splicing</keyword>
<keyword id="KW-0040">ANK repeat</keyword>
<keyword id="KW-0106">Calcium</keyword>
<keyword id="KW-0107">Calcium channel</keyword>
<keyword id="KW-0109">Calcium transport</keyword>
<keyword id="KW-1003">Cell membrane</keyword>
<keyword id="KW-0225">Disease variant</keyword>
<keyword id="KW-0325">Glycoprotein</keyword>
<keyword id="KW-0407">Ion channel</keyword>
<keyword id="KW-0406">Ion transport</keyword>
<keyword id="KW-0472">Membrane</keyword>
<keyword id="KW-0479">Metal-binding</keyword>
<keyword id="KW-0523">Neurodegeneration</keyword>
<keyword id="KW-1267">Proteomics identification</keyword>
<keyword id="KW-1185">Reference proteome</keyword>
<keyword id="KW-0677">Repeat</keyword>
<keyword id="KW-0950">Spinocerebellar ataxia</keyword>
<keyword id="KW-0812">Transmembrane</keyword>
<keyword id="KW-1133">Transmembrane helix</keyword>
<keyword id="KW-0813">Transport</keyword>